<comment type="function">
    <text>Receptor for the chemotactic and inflammatory C3a, C4a and C5a anaphylatoxin peptides and also for their dearginated forms ASP/C3adesArg, C4adesArg and C5adesArg respectively. Couples weakly to G(i)-mediated signaling pathways.</text>
</comment>
<comment type="subunit">
    <text evidence="1">Interacts with C3 (the anaphylatoxin peptide C3a and the adipogenic hormone ASP); the interaction occurs with higher affinity for ASP, enhancing the phosphorylation and activation of GPR77, recruitment of ARRB2 to the cell surface and endocytosis of GRP77.</text>
</comment>
<comment type="subcellular location">
    <subcellularLocation>
        <location>Cell membrane</location>
        <topology>Multi-pass membrane protein</topology>
    </subcellularLocation>
</comment>
<comment type="similarity">
    <text evidence="3">Belongs to the G-protein coupled receptor 1 family.</text>
</comment>
<gene>
    <name type="primary">C5ar2</name>
    <name type="synonym">C5l2</name>
    <name type="synonym">Gpr77</name>
</gene>
<accession>Q695P6</accession>
<organism>
    <name type="scientific">Rattus norvegicus</name>
    <name type="common">Rat</name>
    <dbReference type="NCBI Taxonomy" id="10116"/>
    <lineage>
        <taxon>Eukaryota</taxon>
        <taxon>Metazoa</taxon>
        <taxon>Chordata</taxon>
        <taxon>Craniata</taxon>
        <taxon>Vertebrata</taxon>
        <taxon>Euteleostomi</taxon>
        <taxon>Mammalia</taxon>
        <taxon>Eutheria</taxon>
        <taxon>Euarchontoglires</taxon>
        <taxon>Glires</taxon>
        <taxon>Rodentia</taxon>
        <taxon>Myomorpha</taxon>
        <taxon>Muroidea</taxon>
        <taxon>Muridae</taxon>
        <taxon>Murinae</taxon>
        <taxon>Rattus</taxon>
    </lineage>
</organism>
<proteinExistence type="evidence at protein level"/>
<reference key="1">
    <citation type="submission" date="2004-04" db="EMBL/GenBank/DDBJ databases">
        <title>Molecular cloning and expression of C5L2, a new C5a orphan receptor in sepsis.</title>
        <authorList>
            <person name="Gao H."/>
            <person name="Neff T."/>
            <person name="Younkin E."/>
            <person name="Hoesel M."/>
            <person name="Man Y."/>
            <person name="Sarma V."/>
            <person name="Guo R.-F."/>
            <person name="Tomlins S."/>
            <person name="Riedemann N."/>
            <person name="Speyer C."/>
            <person name="Zetoune F."/>
            <person name="Ward P."/>
        </authorList>
    </citation>
    <scope>NUCLEOTIDE SEQUENCE [MRNA]</scope>
    <source>
        <strain>Long Evans</strain>
    </source>
</reference>
<reference key="2">
    <citation type="journal article" date="2012" name="Nat. Commun.">
        <title>Quantitative maps of protein phosphorylation sites across 14 different rat organs and tissues.</title>
        <authorList>
            <person name="Lundby A."/>
            <person name="Secher A."/>
            <person name="Lage K."/>
            <person name="Nordsborg N.B."/>
            <person name="Dmytriyev A."/>
            <person name="Lundby C."/>
            <person name="Olsen J.V."/>
        </authorList>
    </citation>
    <scope>PHOSPHORYLATION [LARGE SCALE ANALYSIS] AT SER-326</scope>
    <scope>IDENTIFICATION BY MASS SPECTROMETRY [LARGE SCALE ANALYSIS]</scope>
</reference>
<name>C5AR2_RAT</name>
<evidence type="ECO:0000250" key="1"/>
<evidence type="ECO:0000255" key="2"/>
<evidence type="ECO:0000255" key="3">
    <source>
        <dbReference type="PROSITE-ProRule" id="PRU00521"/>
    </source>
</evidence>
<evidence type="ECO:0007744" key="4">
    <source>
    </source>
</evidence>
<feature type="chain" id="PRO_0000303084" description="C5a anaphylatoxin chemotactic receptor 2">
    <location>
        <begin position="1"/>
        <end position="343"/>
    </location>
</feature>
<feature type="topological domain" description="Extracellular" evidence="2">
    <location>
        <begin position="1"/>
        <end position="44"/>
    </location>
</feature>
<feature type="transmembrane region" description="Helical; Name=1" evidence="2">
    <location>
        <begin position="45"/>
        <end position="67"/>
    </location>
</feature>
<feature type="topological domain" description="Cytoplasmic" evidence="2">
    <location>
        <begin position="68"/>
        <end position="78"/>
    </location>
</feature>
<feature type="transmembrane region" description="Helical; Name=2" evidence="2">
    <location>
        <begin position="79"/>
        <end position="101"/>
    </location>
</feature>
<feature type="topological domain" description="Extracellular" evidence="2">
    <location>
        <begin position="102"/>
        <end position="120"/>
    </location>
</feature>
<feature type="transmembrane region" description="Helical; Name=3" evidence="2">
    <location>
        <begin position="121"/>
        <end position="143"/>
    </location>
</feature>
<feature type="topological domain" description="Cytoplasmic" evidence="2">
    <location>
        <begin position="144"/>
        <end position="155"/>
    </location>
</feature>
<feature type="transmembrane region" description="Helical; Name=4" evidence="2">
    <location>
        <begin position="156"/>
        <end position="178"/>
    </location>
</feature>
<feature type="topological domain" description="Extracellular" evidence="2">
    <location>
        <begin position="179"/>
        <end position="208"/>
    </location>
</feature>
<feature type="transmembrane region" description="Helical; Name=5" evidence="2">
    <location>
        <begin position="209"/>
        <end position="231"/>
    </location>
</feature>
<feature type="topological domain" description="Cytoplasmic" evidence="2">
    <location>
        <begin position="232"/>
        <end position="243"/>
    </location>
</feature>
<feature type="transmembrane region" description="Helical; Name=6" evidence="2">
    <location>
        <begin position="244"/>
        <end position="266"/>
    </location>
</feature>
<feature type="topological domain" description="Extracellular" evidence="2">
    <location>
        <begin position="267"/>
        <end position="280"/>
    </location>
</feature>
<feature type="transmembrane region" description="Helical; Name=7" evidence="2">
    <location>
        <begin position="281"/>
        <end position="300"/>
    </location>
</feature>
<feature type="topological domain" description="Cytoplasmic" evidence="2">
    <location>
        <begin position="301"/>
        <end position="343"/>
    </location>
</feature>
<feature type="modified residue" description="Phosphoserine" evidence="4">
    <location>
        <position position="326"/>
    </location>
</feature>
<feature type="glycosylation site" description="N-linked (GlcNAc...) asparagine" evidence="2">
    <location>
        <position position="3"/>
    </location>
</feature>
<feature type="disulfide bond" evidence="3">
    <location>
        <begin position="113"/>
        <end position="192"/>
    </location>
</feature>
<protein>
    <recommendedName>
        <fullName>C5a anaphylatoxin chemotactic receptor 2</fullName>
    </recommendedName>
    <alternativeName>
        <fullName>Complement component 5a receptor 2</fullName>
    </alternativeName>
    <alternativeName>
        <fullName>G-protein coupled receptor 77</fullName>
    </alternativeName>
</protein>
<keyword id="KW-1003">Cell membrane</keyword>
<keyword id="KW-1015">Disulfide bond</keyword>
<keyword id="KW-0297">G-protein coupled receptor</keyword>
<keyword id="KW-0325">Glycoprotein</keyword>
<keyword id="KW-0472">Membrane</keyword>
<keyword id="KW-0597">Phosphoprotein</keyword>
<keyword id="KW-0675">Receptor</keyword>
<keyword id="KW-1185">Reference proteome</keyword>
<keyword id="KW-0807">Transducer</keyword>
<keyword id="KW-0812">Transmembrane</keyword>
<keyword id="KW-1133">Transmembrane helix</keyword>
<sequence length="343" mass="38123">MLNDTTSKDYEYEYDQEQYSDLLNVPVDCPAGNCFSNDAYLIVLLGLYSVIFLVGVPGNTLLAWVTWKESRHRLGASWFLHLTMADLLCCVSLPFLAVPIAQKGHWPYGTAGCWLLSSITVLSMYASVLLLTGLSGDLFLLAFRPSWKNADQRTCGVRVVQVSSWMLALLLTVPGAVYRKLLQEHYPPRLVCGTNYGGSVTAEVTITTVRFLFGFLVPLVFMASCHGILQRQMARRHWPLGTAVVVGFFICWTPFHLLRVIIAVASSHSPLLAWALEAEPLVTGLALAHSALNPIMFLYFGRKQLCKSLQAACHWALRDLQDEEESAVTKVSTSQEMVSEMPV</sequence>
<dbReference type="EMBL" id="AY600435">
    <property type="protein sequence ID" value="AAT12287.1"/>
    <property type="molecule type" value="mRNA"/>
</dbReference>
<dbReference type="RefSeq" id="NP_001003710.3">
    <property type="nucleotide sequence ID" value="NM_001003710.3"/>
</dbReference>
<dbReference type="RefSeq" id="XP_006228415.1">
    <property type="nucleotide sequence ID" value="XM_006228353.5"/>
</dbReference>
<dbReference type="SMR" id="Q695P6"/>
<dbReference type="FunCoup" id="Q695P6">
    <property type="interactions" value="29"/>
</dbReference>
<dbReference type="STRING" id="10116.ENSRNOP00000067721"/>
<dbReference type="GlyCosmos" id="Q695P6">
    <property type="glycosylation" value="1 site, No reported glycans"/>
</dbReference>
<dbReference type="GlyGen" id="Q695P6">
    <property type="glycosylation" value="1 site"/>
</dbReference>
<dbReference type="iPTMnet" id="Q695P6"/>
<dbReference type="PhosphoSitePlus" id="Q695P6"/>
<dbReference type="PaxDb" id="10116-ENSRNOP00000067721"/>
<dbReference type="Ensembl" id="ENSRNOT00000102131.1">
    <property type="protein sequence ID" value="ENSRNOP00000081314.1"/>
    <property type="gene ID" value="ENSRNOG00000049028.3"/>
</dbReference>
<dbReference type="GeneID" id="445269"/>
<dbReference type="KEGG" id="rno:445269"/>
<dbReference type="AGR" id="RGD:1303027"/>
<dbReference type="CTD" id="27202"/>
<dbReference type="RGD" id="1303027">
    <property type="gene designation" value="C5ar2"/>
</dbReference>
<dbReference type="eggNOG" id="ENOG502R35Z">
    <property type="taxonomic scope" value="Eukaryota"/>
</dbReference>
<dbReference type="GeneTree" id="ENSGT01130000278339"/>
<dbReference type="HOGENOM" id="CLU_009579_8_0_1"/>
<dbReference type="InParanoid" id="Q695P6"/>
<dbReference type="OMA" id="CCFTPIF"/>
<dbReference type="PhylomeDB" id="Q695P6"/>
<dbReference type="Reactome" id="R-RNO-375276">
    <property type="pathway name" value="Peptide ligand-binding receptors"/>
</dbReference>
<dbReference type="Reactome" id="R-RNO-977606">
    <property type="pathway name" value="Regulation of Complement cascade"/>
</dbReference>
<dbReference type="PRO" id="PR:Q695P6"/>
<dbReference type="Proteomes" id="UP000002494">
    <property type="component" value="Chromosome 1"/>
</dbReference>
<dbReference type="Bgee" id="ENSRNOG00000049028">
    <property type="expression patterns" value="Expressed in liver and 17 other cell types or tissues"/>
</dbReference>
<dbReference type="GO" id="GO:0045177">
    <property type="term" value="C:apical part of cell"/>
    <property type="evidence" value="ECO:0000250"/>
    <property type="project" value="UniProtKB"/>
</dbReference>
<dbReference type="GO" id="GO:0009925">
    <property type="term" value="C:basal plasma membrane"/>
    <property type="evidence" value="ECO:0000250"/>
    <property type="project" value="UniProtKB"/>
</dbReference>
<dbReference type="GO" id="GO:0005886">
    <property type="term" value="C:plasma membrane"/>
    <property type="evidence" value="ECO:0000318"/>
    <property type="project" value="GO_Central"/>
</dbReference>
<dbReference type="GO" id="GO:0004878">
    <property type="term" value="F:complement component C5a receptor activity"/>
    <property type="evidence" value="ECO:0000318"/>
    <property type="project" value="GO_Central"/>
</dbReference>
<dbReference type="GO" id="GO:0004930">
    <property type="term" value="F:G protein-coupled receptor activity"/>
    <property type="evidence" value="ECO:0000318"/>
    <property type="project" value="GO_Central"/>
</dbReference>
<dbReference type="GO" id="GO:0002430">
    <property type="term" value="P:complement receptor mediated signaling pathway"/>
    <property type="evidence" value="ECO:0000318"/>
    <property type="project" value="GO_Central"/>
</dbReference>
<dbReference type="GO" id="GO:0007186">
    <property type="term" value="P:G protein-coupled receptor signaling pathway"/>
    <property type="evidence" value="ECO:0000304"/>
    <property type="project" value="RGD"/>
</dbReference>
<dbReference type="GO" id="GO:0006954">
    <property type="term" value="P:inflammatory response"/>
    <property type="evidence" value="ECO:0000318"/>
    <property type="project" value="GO_Central"/>
</dbReference>
<dbReference type="GO" id="GO:0032715">
    <property type="term" value="P:negative regulation of interleukin-6 production"/>
    <property type="evidence" value="ECO:0000250"/>
    <property type="project" value="UniProtKB"/>
</dbReference>
<dbReference type="GO" id="GO:0090024">
    <property type="term" value="P:negative regulation of neutrophil chemotaxis"/>
    <property type="evidence" value="ECO:0000250"/>
    <property type="project" value="UniProtKB"/>
</dbReference>
<dbReference type="GO" id="GO:0032720">
    <property type="term" value="P:negative regulation of tumor necrosis factor production"/>
    <property type="evidence" value="ECO:0000250"/>
    <property type="project" value="UniProtKB"/>
</dbReference>
<dbReference type="GO" id="GO:0007200">
    <property type="term" value="P:phospholipase C-activating G protein-coupled receptor signaling pathway"/>
    <property type="evidence" value="ECO:0000318"/>
    <property type="project" value="GO_Central"/>
</dbReference>
<dbReference type="GO" id="GO:0007204">
    <property type="term" value="P:positive regulation of cytosolic calcium ion concentration"/>
    <property type="evidence" value="ECO:0000318"/>
    <property type="project" value="GO_Central"/>
</dbReference>
<dbReference type="GO" id="GO:0032677">
    <property type="term" value="P:regulation of interleukin-8 production"/>
    <property type="evidence" value="ECO:0000250"/>
    <property type="project" value="UniProtKB"/>
</dbReference>
<dbReference type="FunFam" id="1.20.1070.10:FF:000296">
    <property type="entry name" value="C5a anaphylatoxin chemotactic receptor 2"/>
    <property type="match status" value="1"/>
</dbReference>
<dbReference type="Gene3D" id="1.20.1070.10">
    <property type="entry name" value="Rhodopsin 7-helix transmembrane proteins"/>
    <property type="match status" value="1"/>
</dbReference>
<dbReference type="InterPro" id="IPR000826">
    <property type="entry name" value="Formyl_rcpt-rel"/>
</dbReference>
<dbReference type="InterPro" id="IPR000276">
    <property type="entry name" value="GPCR_Rhodpsn"/>
</dbReference>
<dbReference type="InterPro" id="IPR017452">
    <property type="entry name" value="GPCR_Rhodpsn_7TM"/>
</dbReference>
<dbReference type="PANTHER" id="PTHR24225:SF1">
    <property type="entry name" value="C5A ANAPHYLATOXIN CHEMOTACTIC RECEPTOR 2"/>
    <property type="match status" value="1"/>
</dbReference>
<dbReference type="PANTHER" id="PTHR24225">
    <property type="entry name" value="CHEMOTACTIC RECEPTOR"/>
    <property type="match status" value="1"/>
</dbReference>
<dbReference type="Pfam" id="PF00001">
    <property type="entry name" value="7tm_1"/>
    <property type="match status" value="1"/>
</dbReference>
<dbReference type="PRINTS" id="PR00237">
    <property type="entry name" value="GPCRRHODOPSN"/>
</dbReference>
<dbReference type="SUPFAM" id="SSF81321">
    <property type="entry name" value="Family A G protein-coupled receptor-like"/>
    <property type="match status" value="1"/>
</dbReference>
<dbReference type="PROSITE" id="PS50262">
    <property type="entry name" value="G_PROTEIN_RECEP_F1_2"/>
    <property type="match status" value="1"/>
</dbReference>